<proteinExistence type="inferred from homology"/>
<dbReference type="EC" id="6.1.1.17" evidence="1"/>
<dbReference type="EMBL" id="AM233362">
    <property type="protein sequence ID" value="CAJ78659.1"/>
    <property type="molecule type" value="Genomic_DNA"/>
</dbReference>
<dbReference type="RefSeq" id="WP_003014275.1">
    <property type="nucleotide sequence ID" value="NZ_CP009694.1"/>
</dbReference>
<dbReference type="SMR" id="Q2A5I8"/>
<dbReference type="KEGG" id="ftl:FTL_0218"/>
<dbReference type="Proteomes" id="UP000001944">
    <property type="component" value="Chromosome"/>
</dbReference>
<dbReference type="GO" id="GO:0005829">
    <property type="term" value="C:cytosol"/>
    <property type="evidence" value="ECO:0007669"/>
    <property type="project" value="TreeGrafter"/>
</dbReference>
<dbReference type="GO" id="GO:0005524">
    <property type="term" value="F:ATP binding"/>
    <property type="evidence" value="ECO:0007669"/>
    <property type="project" value="UniProtKB-UniRule"/>
</dbReference>
<dbReference type="GO" id="GO:0004818">
    <property type="term" value="F:glutamate-tRNA ligase activity"/>
    <property type="evidence" value="ECO:0007669"/>
    <property type="project" value="UniProtKB-UniRule"/>
</dbReference>
<dbReference type="GO" id="GO:0000049">
    <property type="term" value="F:tRNA binding"/>
    <property type="evidence" value="ECO:0007669"/>
    <property type="project" value="InterPro"/>
</dbReference>
<dbReference type="GO" id="GO:0008270">
    <property type="term" value="F:zinc ion binding"/>
    <property type="evidence" value="ECO:0007669"/>
    <property type="project" value="UniProtKB-UniRule"/>
</dbReference>
<dbReference type="GO" id="GO:0006424">
    <property type="term" value="P:glutamyl-tRNA aminoacylation"/>
    <property type="evidence" value="ECO:0007669"/>
    <property type="project" value="UniProtKB-UniRule"/>
</dbReference>
<dbReference type="CDD" id="cd00808">
    <property type="entry name" value="GluRS_core"/>
    <property type="match status" value="1"/>
</dbReference>
<dbReference type="FunFam" id="3.40.50.620:FF:000007">
    <property type="entry name" value="Glutamate--tRNA ligase"/>
    <property type="match status" value="1"/>
</dbReference>
<dbReference type="Gene3D" id="1.10.10.350">
    <property type="match status" value="1"/>
</dbReference>
<dbReference type="Gene3D" id="3.40.50.620">
    <property type="entry name" value="HUPs"/>
    <property type="match status" value="1"/>
</dbReference>
<dbReference type="HAMAP" id="MF_00022">
    <property type="entry name" value="Glu_tRNA_synth_type1"/>
    <property type="match status" value="1"/>
</dbReference>
<dbReference type="InterPro" id="IPR045462">
    <property type="entry name" value="aa-tRNA-synth_I_cd-bd"/>
</dbReference>
<dbReference type="InterPro" id="IPR020751">
    <property type="entry name" value="aa-tRNA-synth_I_codon-bd_sub2"/>
</dbReference>
<dbReference type="InterPro" id="IPR001412">
    <property type="entry name" value="aa-tRNA-synth_I_CS"/>
</dbReference>
<dbReference type="InterPro" id="IPR008925">
    <property type="entry name" value="aa_tRNA-synth_I_cd-bd_sf"/>
</dbReference>
<dbReference type="InterPro" id="IPR004527">
    <property type="entry name" value="Glu-tRNA-ligase_bac/mito"/>
</dbReference>
<dbReference type="InterPro" id="IPR000924">
    <property type="entry name" value="Glu/Gln-tRNA-synth"/>
</dbReference>
<dbReference type="InterPro" id="IPR020058">
    <property type="entry name" value="Glu/Gln-tRNA-synth_Ib_cat-dom"/>
</dbReference>
<dbReference type="InterPro" id="IPR049940">
    <property type="entry name" value="GluQ/Sye"/>
</dbReference>
<dbReference type="InterPro" id="IPR033910">
    <property type="entry name" value="GluRS_core"/>
</dbReference>
<dbReference type="InterPro" id="IPR014729">
    <property type="entry name" value="Rossmann-like_a/b/a_fold"/>
</dbReference>
<dbReference type="NCBIfam" id="TIGR00464">
    <property type="entry name" value="gltX_bact"/>
    <property type="match status" value="1"/>
</dbReference>
<dbReference type="PANTHER" id="PTHR43311">
    <property type="entry name" value="GLUTAMATE--TRNA LIGASE"/>
    <property type="match status" value="1"/>
</dbReference>
<dbReference type="PANTHER" id="PTHR43311:SF2">
    <property type="entry name" value="GLUTAMATE--TRNA LIGASE, MITOCHONDRIAL-RELATED"/>
    <property type="match status" value="1"/>
</dbReference>
<dbReference type="Pfam" id="PF19269">
    <property type="entry name" value="Anticodon_2"/>
    <property type="match status" value="1"/>
</dbReference>
<dbReference type="Pfam" id="PF00749">
    <property type="entry name" value="tRNA-synt_1c"/>
    <property type="match status" value="1"/>
</dbReference>
<dbReference type="PRINTS" id="PR00987">
    <property type="entry name" value="TRNASYNTHGLU"/>
</dbReference>
<dbReference type="SUPFAM" id="SSF48163">
    <property type="entry name" value="An anticodon-binding domain of class I aminoacyl-tRNA synthetases"/>
    <property type="match status" value="1"/>
</dbReference>
<dbReference type="SUPFAM" id="SSF52374">
    <property type="entry name" value="Nucleotidylyl transferase"/>
    <property type="match status" value="1"/>
</dbReference>
<dbReference type="PROSITE" id="PS00178">
    <property type="entry name" value="AA_TRNA_LIGASE_I"/>
    <property type="match status" value="1"/>
</dbReference>
<protein>
    <recommendedName>
        <fullName evidence="1">Glutamate--tRNA ligase</fullName>
        <ecNumber evidence="1">6.1.1.17</ecNumber>
    </recommendedName>
    <alternativeName>
        <fullName evidence="1">Glutamyl-tRNA synthetase</fullName>
        <shortName evidence="1">GluRS</shortName>
    </alternativeName>
</protein>
<organism>
    <name type="scientific">Francisella tularensis subsp. holarctica (strain LVS)</name>
    <dbReference type="NCBI Taxonomy" id="376619"/>
    <lineage>
        <taxon>Bacteria</taxon>
        <taxon>Pseudomonadati</taxon>
        <taxon>Pseudomonadota</taxon>
        <taxon>Gammaproteobacteria</taxon>
        <taxon>Thiotrichales</taxon>
        <taxon>Francisellaceae</taxon>
        <taxon>Francisella</taxon>
    </lineage>
</organism>
<gene>
    <name evidence="1" type="primary">gltX</name>
    <name type="ordered locus">FTL_0218</name>
</gene>
<comment type="function">
    <text evidence="1">Catalyzes the attachment of glutamate to tRNA(Glu) in a two-step reaction: glutamate is first activated by ATP to form Glu-AMP and then transferred to the acceptor end of tRNA(Glu).</text>
</comment>
<comment type="catalytic activity">
    <reaction evidence="1">
        <text>tRNA(Glu) + L-glutamate + ATP = L-glutamyl-tRNA(Glu) + AMP + diphosphate</text>
        <dbReference type="Rhea" id="RHEA:23540"/>
        <dbReference type="Rhea" id="RHEA-COMP:9663"/>
        <dbReference type="Rhea" id="RHEA-COMP:9680"/>
        <dbReference type="ChEBI" id="CHEBI:29985"/>
        <dbReference type="ChEBI" id="CHEBI:30616"/>
        <dbReference type="ChEBI" id="CHEBI:33019"/>
        <dbReference type="ChEBI" id="CHEBI:78442"/>
        <dbReference type="ChEBI" id="CHEBI:78520"/>
        <dbReference type="ChEBI" id="CHEBI:456215"/>
        <dbReference type="EC" id="6.1.1.17"/>
    </reaction>
</comment>
<comment type="cofactor">
    <cofactor evidence="1">
        <name>Zn(2+)</name>
        <dbReference type="ChEBI" id="CHEBI:29105"/>
    </cofactor>
    <text evidence="1">Binds 1 zinc ion per subunit.</text>
</comment>
<comment type="subunit">
    <text evidence="1">Monomer.</text>
</comment>
<comment type="subcellular location">
    <subcellularLocation>
        <location evidence="1">Cytoplasm</location>
    </subcellularLocation>
</comment>
<comment type="similarity">
    <text evidence="1">Belongs to the class-I aminoacyl-tRNA synthetase family. Glutamate--tRNA ligase type 1 subfamily.</text>
</comment>
<feature type="chain" id="PRO_1000001902" description="Glutamate--tRNA ligase">
    <location>
        <begin position="1"/>
        <end position="468"/>
    </location>
</feature>
<feature type="short sequence motif" description="'HIGH' region" evidence="1">
    <location>
        <begin position="8"/>
        <end position="18"/>
    </location>
</feature>
<feature type="short sequence motif" description="'KMSKS' region" evidence="1">
    <location>
        <begin position="236"/>
        <end position="240"/>
    </location>
</feature>
<feature type="binding site" evidence="1">
    <location>
        <position position="97"/>
    </location>
    <ligand>
        <name>Zn(2+)</name>
        <dbReference type="ChEBI" id="CHEBI:29105"/>
    </ligand>
</feature>
<feature type="binding site" evidence="1">
    <location>
        <position position="99"/>
    </location>
    <ligand>
        <name>Zn(2+)</name>
        <dbReference type="ChEBI" id="CHEBI:29105"/>
    </ligand>
</feature>
<feature type="binding site" evidence="1">
    <location>
        <position position="124"/>
    </location>
    <ligand>
        <name>Zn(2+)</name>
        <dbReference type="ChEBI" id="CHEBI:29105"/>
    </ligand>
</feature>
<feature type="binding site" evidence="1">
    <location>
        <position position="126"/>
    </location>
    <ligand>
        <name>Zn(2+)</name>
        <dbReference type="ChEBI" id="CHEBI:29105"/>
    </ligand>
</feature>
<feature type="binding site" evidence="1">
    <location>
        <position position="239"/>
    </location>
    <ligand>
        <name>ATP</name>
        <dbReference type="ChEBI" id="CHEBI:30616"/>
    </ligand>
</feature>
<evidence type="ECO:0000255" key="1">
    <source>
        <dbReference type="HAMAP-Rule" id="MF_00022"/>
    </source>
</evidence>
<sequence length="468" mass="53007">MITTRFAPSPTGFLHVGGVRTALFSWLYAKNNNGKFILRIEDTDLERSTQEAVDAILDGMSWLGLKNDGEIYYQTKRFDRYKEVIQELIADGKAYYCSCSKERLEELREYQQANNLKTGYDGKCRDANYIPQQGESYVVRFKNPQDGVVSWDDAVKGRISISNHELDDMIIQRADGSPTYNFCVVVDDIDMAITHIIRGDDHVNNTPKQINIYKALNANVPVFAHVPMILGPDGAKLSKRHGAVNVMQYREDGYLPQAILNYLVRLGWSHGDQEIFSIEEMIKAFNLEHINASPSRFDFEKLKWLNKHYIKESKFDDIQTEVEYHFAKIGLDISNGPDLKELVAVMAEKVDTLVELAEKSSYFYSDDISYDENAVKKHIKASTGEIFVKLLENFEALDAQQWQDPDVLYNIVSTTAEQCQVGMGKVGMPLRVAITSSGQSPDIGITLKLLGKNKVVARLTKALEELCK</sequence>
<reference key="1">
    <citation type="submission" date="2006-03" db="EMBL/GenBank/DDBJ databases">
        <title>Complete genome sequence of Francisella tularensis LVS (Live Vaccine Strain).</title>
        <authorList>
            <person name="Chain P."/>
            <person name="Larimer F."/>
            <person name="Land M."/>
            <person name="Stilwagen S."/>
            <person name="Larsson P."/>
            <person name="Bearden S."/>
            <person name="Chu M."/>
            <person name="Oyston P."/>
            <person name="Forsman M."/>
            <person name="Andersson S."/>
            <person name="Lindler L."/>
            <person name="Titball R."/>
            <person name="Garcia E."/>
        </authorList>
    </citation>
    <scope>NUCLEOTIDE SEQUENCE [LARGE SCALE GENOMIC DNA]</scope>
    <source>
        <strain>LVS</strain>
    </source>
</reference>
<accession>Q2A5I8</accession>
<keyword id="KW-0030">Aminoacyl-tRNA synthetase</keyword>
<keyword id="KW-0067">ATP-binding</keyword>
<keyword id="KW-0963">Cytoplasm</keyword>
<keyword id="KW-0436">Ligase</keyword>
<keyword id="KW-0479">Metal-binding</keyword>
<keyword id="KW-0547">Nucleotide-binding</keyword>
<keyword id="KW-0648">Protein biosynthesis</keyword>
<keyword id="KW-1185">Reference proteome</keyword>
<keyword id="KW-0862">Zinc</keyword>
<name>SYE_FRATH</name>